<keyword id="KW-0004">4Fe-4S</keyword>
<keyword id="KW-1003">Cell membrane</keyword>
<keyword id="KW-0408">Iron</keyword>
<keyword id="KW-0411">Iron-sulfur</keyword>
<keyword id="KW-0472">Membrane</keyword>
<keyword id="KW-0479">Metal-binding</keyword>
<keyword id="KW-0520">NAD</keyword>
<keyword id="KW-0874">Quinone</keyword>
<keyword id="KW-1278">Translocase</keyword>
<keyword id="KW-0813">Transport</keyword>
<comment type="function">
    <text evidence="1">NDH-1 shuttles electrons from NADH, via FMN and iron-sulfur (Fe-S) centers, to quinones in the respiratory chain. The immediate electron acceptor for the enzyme in this species is believed to be a menaquinone. Couples the redox reaction to proton translocation (for every two electrons transferred, four hydrogen ions are translocated across the cytoplasmic membrane), and thus conserves the redox energy in a proton gradient.</text>
</comment>
<comment type="catalytic activity">
    <reaction evidence="1">
        <text>a quinone + NADH + 5 H(+)(in) = a quinol + NAD(+) + 4 H(+)(out)</text>
        <dbReference type="Rhea" id="RHEA:57888"/>
        <dbReference type="ChEBI" id="CHEBI:15378"/>
        <dbReference type="ChEBI" id="CHEBI:24646"/>
        <dbReference type="ChEBI" id="CHEBI:57540"/>
        <dbReference type="ChEBI" id="CHEBI:57945"/>
        <dbReference type="ChEBI" id="CHEBI:132124"/>
    </reaction>
</comment>
<comment type="cofactor">
    <cofactor evidence="1">
        <name>[4Fe-4S] cluster</name>
        <dbReference type="ChEBI" id="CHEBI:49883"/>
    </cofactor>
    <text evidence="1">Binds 1 [4Fe-4S] cluster.</text>
</comment>
<comment type="subunit">
    <text evidence="1">NDH-1 is composed of 14 different subunits. Subunits NuoB, C, D, E, F, and G constitute the peripheral sector of the complex.</text>
</comment>
<comment type="subcellular location">
    <subcellularLocation>
        <location evidence="1">Cell membrane</location>
        <topology evidence="1">Peripheral membrane protein</topology>
        <orientation evidence="1">Cytoplasmic side</orientation>
    </subcellularLocation>
</comment>
<comment type="similarity">
    <text evidence="1">Belongs to the complex I 20 kDa subunit family.</text>
</comment>
<organism>
    <name type="scientific">Mycolicibacterium gilvum (strain PYR-GCK)</name>
    <name type="common">Mycobacterium gilvum (strain PYR-GCK)</name>
    <dbReference type="NCBI Taxonomy" id="350054"/>
    <lineage>
        <taxon>Bacteria</taxon>
        <taxon>Bacillati</taxon>
        <taxon>Actinomycetota</taxon>
        <taxon>Actinomycetes</taxon>
        <taxon>Mycobacteriales</taxon>
        <taxon>Mycobacteriaceae</taxon>
        <taxon>Mycolicibacterium</taxon>
    </lineage>
</organism>
<reference key="1">
    <citation type="submission" date="2007-04" db="EMBL/GenBank/DDBJ databases">
        <title>Complete sequence of chromosome of Mycobacterium gilvum PYR-GCK.</title>
        <authorList>
            <consortium name="US DOE Joint Genome Institute"/>
            <person name="Copeland A."/>
            <person name="Lucas S."/>
            <person name="Lapidus A."/>
            <person name="Barry K."/>
            <person name="Detter J.C."/>
            <person name="Glavina del Rio T."/>
            <person name="Hammon N."/>
            <person name="Israni S."/>
            <person name="Dalin E."/>
            <person name="Tice H."/>
            <person name="Pitluck S."/>
            <person name="Chain P."/>
            <person name="Malfatti S."/>
            <person name="Shin M."/>
            <person name="Vergez L."/>
            <person name="Schmutz J."/>
            <person name="Larimer F."/>
            <person name="Land M."/>
            <person name="Hauser L."/>
            <person name="Kyrpides N."/>
            <person name="Mikhailova N."/>
            <person name="Miller C."/>
            <person name="Richardson P."/>
        </authorList>
    </citation>
    <scope>NUCLEOTIDE SEQUENCE [LARGE SCALE GENOMIC DNA]</scope>
    <source>
        <strain>PYR-GCK</strain>
    </source>
</reference>
<proteinExistence type="inferred from homology"/>
<protein>
    <recommendedName>
        <fullName evidence="1">NADH-quinone oxidoreductase subunit B</fullName>
        <ecNumber evidence="1">7.1.1.-</ecNumber>
    </recommendedName>
    <alternativeName>
        <fullName evidence="1">NADH dehydrogenase I subunit B</fullName>
    </alternativeName>
    <alternativeName>
        <fullName evidence="1">NDH-1 subunit B</fullName>
    </alternativeName>
</protein>
<evidence type="ECO:0000255" key="1">
    <source>
        <dbReference type="HAMAP-Rule" id="MF_01356"/>
    </source>
</evidence>
<gene>
    <name evidence="1" type="primary">nuoB</name>
    <name type="ordered locus">Mflv_4482</name>
</gene>
<feature type="chain" id="PRO_0000376278" description="NADH-quinone oxidoreductase subunit B">
    <location>
        <begin position="1"/>
        <end position="184"/>
    </location>
</feature>
<feature type="binding site" evidence="1">
    <location>
        <position position="37"/>
    </location>
    <ligand>
        <name>[4Fe-4S] cluster</name>
        <dbReference type="ChEBI" id="CHEBI:49883"/>
    </ligand>
</feature>
<feature type="binding site" evidence="1">
    <location>
        <position position="38"/>
    </location>
    <ligand>
        <name>[4Fe-4S] cluster</name>
        <dbReference type="ChEBI" id="CHEBI:49883"/>
    </ligand>
</feature>
<feature type="binding site" evidence="1">
    <location>
        <position position="103"/>
    </location>
    <ligand>
        <name>[4Fe-4S] cluster</name>
        <dbReference type="ChEBI" id="CHEBI:49883"/>
    </ligand>
</feature>
<feature type="binding site" evidence="1">
    <location>
        <position position="132"/>
    </location>
    <ligand>
        <name>[4Fe-4S] cluster</name>
        <dbReference type="ChEBI" id="CHEBI:49883"/>
    </ligand>
</feature>
<name>NUOB_MYCGI</name>
<accession>A4TDB9</accession>
<sequence length="184" mass="20110">MGLEEKLPGGILLSTVEKVAGYVRKGSLWPATFGLACCAIEMMATAGPRFDISRFGMERFSATPRQADLMIVAGRVSQKMAPVLRQIYDQMAEPKWVLAMGVCASSGGMFNNYAVVQGVDHVVPVDIYLPGCPPRPEMLLHAILKLHDKIQQMPLGVNREEAIREAEQAAMALTPTIELKGLLR</sequence>
<dbReference type="EC" id="7.1.1.-" evidence="1"/>
<dbReference type="EMBL" id="CP000656">
    <property type="protein sequence ID" value="ABP46951.1"/>
    <property type="molecule type" value="Genomic_DNA"/>
</dbReference>
<dbReference type="SMR" id="A4TDB9"/>
<dbReference type="STRING" id="350054.Mflv_4482"/>
<dbReference type="KEGG" id="mgi:Mflv_4482"/>
<dbReference type="eggNOG" id="COG0377">
    <property type="taxonomic scope" value="Bacteria"/>
</dbReference>
<dbReference type="HOGENOM" id="CLU_055737_7_3_11"/>
<dbReference type="OrthoDB" id="9786737at2"/>
<dbReference type="GO" id="GO:0005886">
    <property type="term" value="C:plasma membrane"/>
    <property type="evidence" value="ECO:0007669"/>
    <property type="project" value="UniProtKB-SubCell"/>
</dbReference>
<dbReference type="GO" id="GO:0045271">
    <property type="term" value="C:respiratory chain complex I"/>
    <property type="evidence" value="ECO:0007669"/>
    <property type="project" value="TreeGrafter"/>
</dbReference>
<dbReference type="GO" id="GO:0051539">
    <property type="term" value="F:4 iron, 4 sulfur cluster binding"/>
    <property type="evidence" value="ECO:0007669"/>
    <property type="project" value="UniProtKB-KW"/>
</dbReference>
<dbReference type="GO" id="GO:0005506">
    <property type="term" value="F:iron ion binding"/>
    <property type="evidence" value="ECO:0007669"/>
    <property type="project" value="UniProtKB-UniRule"/>
</dbReference>
<dbReference type="GO" id="GO:0008137">
    <property type="term" value="F:NADH dehydrogenase (ubiquinone) activity"/>
    <property type="evidence" value="ECO:0007669"/>
    <property type="project" value="InterPro"/>
</dbReference>
<dbReference type="GO" id="GO:0050136">
    <property type="term" value="F:NADH:ubiquinone reductase (non-electrogenic) activity"/>
    <property type="evidence" value="ECO:0007669"/>
    <property type="project" value="UniProtKB-UniRule"/>
</dbReference>
<dbReference type="GO" id="GO:0048038">
    <property type="term" value="F:quinone binding"/>
    <property type="evidence" value="ECO:0007669"/>
    <property type="project" value="UniProtKB-KW"/>
</dbReference>
<dbReference type="GO" id="GO:0009060">
    <property type="term" value="P:aerobic respiration"/>
    <property type="evidence" value="ECO:0007669"/>
    <property type="project" value="TreeGrafter"/>
</dbReference>
<dbReference type="GO" id="GO:0015990">
    <property type="term" value="P:electron transport coupled proton transport"/>
    <property type="evidence" value="ECO:0007669"/>
    <property type="project" value="TreeGrafter"/>
</dbReference>
<dbReference type="FunFam" id="3.40.50.12280:FF:000004">
    <property type="entry name" value="NADH-quinone oxidoreductase subunit B"/>
    <property type="match status" value="1"/>
</dbReference>
<dbReference type="Gene3D" id="3.40.50.12280">
    <property type="match status" value="1"/>
</dbReference>
<dbReference type="HAMAP" id="MF_01356">
    <property type="entry name" value="NDH1_NuoB"/>
    <property type="match status" value="1"/>
</dbReference>
<dbReference type="InterPro" id="IPR006137">
    <property type="entry name" value="NADH_UbQ_OxRdtase-like_20kDa"/>
</dbReference>
<dbReference type="InterPro" id="IPR006138">
    <property type="entry name" value="NADH_UQ_OxRdtase_20Kd_su"/>
</dbReference>
<dbReference type="NCBIfam" id="TIGR01957">
    <property type="entry name" value="nuoB_fam"/>
    <property type="match status" value="1"/>
</dbReference>
<dbReference type="NCBIfam" id="NF005012">
    <property type="entry name" value="PRK06411.1"/>
    <property type="match status" value="1"/>
</dbReference>
<dbReference type="PANTHER" id="PTHR11995">
    <property type="entry name" value="NADH DEHYDROGENASE"/>
    <property type="match status" value="1"/>
</dbReference>
<dbReference type="PANTHER" id="PTHR11995:SF14">
    <property type="entry name" value="NADH DEHYDROGENASE [UBIQUINONE] IRON-SULFUR PROTEIN 7, MITOCHONDRIAL"/>
    <property type="match status" value="1"/>
</dbReference>
<dbReference type="Pfam" id="PF01058">
    <property type="entry name" value="Oxidored_q6"/>
    <property type="match status" value="1"/>
</dbReference>
<dbReference type="SUPFAM" id="SSF56770">
    <property type="entry name" value="HydA/Nqo6-like"/>
    <property type="match status" value="1"/>
</dbReference>
<dbReference type="PROSITE" id="PS01150">
    <property type="entry name" value="COMPLEX1_20K"/>
    <property type="match status" value="1"/>
</dbReference>